<accession>Q8SQ78</accession>
<proteinExistence type="inferred from homology"/>
<keyword id="KW-0472">Membrane</keyword>
<keyword id="KW-0496">Mitochondrion</keyword>
<keyword id="KW-0999">Mitochondrion inner membrane</keyword>
<keyword id="KW-0809">Transit peptide</keyword>
<keyword id="KW-0812">Transmembrane</keyword>
<keyword id="KW-1133">Transmembrane helix</keyword>
<keyword id="KW-0832">Ubl conjugation</keyword>
<name>COX8A_PAPHA</name>
<feature type="transit peptide" description="Mitochondrion" evidence="2">
    <location>
        <begin position="1"/>
        <end position="25"/>
    </location>
</feature>
<feature type="chain" id="PRO_0000006194" description="Cytochrome c oxidase subunit 8A, mitochondrial">
    <location>
        <begin position="26"/>
        <end position="69"/>
    </location>
</feature>
<feature type="topological domain" description="Mitochondrial matrix" evidence="2">
    <location>
        <begin position="26"/>
        <end position="36"/>
    </location>
</feature>
<feature type="transmembrane region" description="Helical" evidence="1">
    <location>
        <begin position="37"/>
        <end position="60"/>
    </location>
</feature>
<feature type="topological domain" description="Mitochondrial intermembrane" evidence="2">
    <location>
        <begin position="61"/>
        <end position="69"/>
    </location>
</feature>
<feature type="short sequence motif" description="SIFI-degron" evidence="2">
    <location>
        <begin position="2"/>
        <end position="19"/>
    </location>
</feature>
<protein>
    <recommendedName>
        <fullName>Cytochrome c oxidase subunit 8A, mitochondrial</fullName>
    </recommendedName>
    <alternativeName>
        <fullName>Cytochrome c oxidase polypeptide VIII-liver/heart</fullName>
    </alternativeName>
    <alternativeName>
        <fullName>Cytochrome c oxidase subunit 8-2</fullName>
    </alternativeName>
</protein>
<sequence length="69" mass="7631">MSVLTSLLLRGLTGSARRLPVPRAKVHSMPPEEELGTLEKAIALTSCFVSLFLPAGWILSHLEDYKRPE</sequence>
<comment type="function">
    <text evidence="1">Component of the cytochrome c oxidase, the last enzyme in the mitochondrial electron transport chain which drives oxidative phosphorylation. The respiratory chain contains 3 multisubunit complexes succinate dehydrogenase (complex II, CII), ubiquinol-cytochrome c oxidoreductase (cytochrome b-c1 complex, complex III, CIII) and cytochrome c oxidase (complex IV, CIV), that cooperate to transfer electrons derived from NADH and succinate to molecular oxygen, creating an electrochemical gradient over the inner membrane that drives transmembrane transport and the ATP synthase. Cytochrome c oxidase is the component of the respiratory chain that catalyzes the reduction of oxygen to water. Electrons originating from reduced cytochrome c in the intermembrane space (IMS) are transferred via the dinuclear copper A center (CU(A)) of subunit 2 and heme A of subunit 1 to the active site in subunit 1, a binuclear center (BNC) formed by heme A3 and copper B (CU(B)). The BNC reduces molecular oxygen to 2 water molecules using 4 electrons from cytochrome c in the IMS and 4 protons from the mitochondrial matrix.</text>
</comment>
<comment type="pathway">
    <text evidence="1">Energy metabolism; oxidative phosphorylation.</text>
</comment>
<comment type="subunit">
    <text evidence="2">Component of the cytochrome c oxidase (complex IV, CIV), a multisubunit enzyme composed of 14 subunits. The complex is composed of a catalytic core of 3 subunits MT-CO1, MT-CO2 and MT-CO3, encoded in the mitochondrial DNA, and 11 supernumerary subunits COX4I, COX5A, COX5B, COX6A, COX6B, COX6C, COX7A, COX7B, COX7C, COX8 and NDUFA4, which are encoded in the nuclear genome. The complex exists as a monomer or a dimer and forms supercomplexes (SCs) in the inner mitochondrial membrane with NADH-ubiquinone oxidoreductase (complex I, CI) and ubiquinol-cytochrome c oxidoreductase (cytochrome b-c1 complex, complex III, CIII), resulting in different assemblies (supercomplex SCI(1)III(2)IV(1) and megacomplex MCI(2)III(2)IV(2)).</text>
</comment>
<comment type="subcellular location">
    <subcellularLocation>
        <location evidence="2">Mitochondrion inner membrane</location>
        <topology evidence="2">Single-pass membrane protein</topology>
    </subcellularLocation>
</comment>
<comment type="PTM">
    <text evidence="2">In response to mitochondrial stress, the precursor protein is ubiquitinated by the SIFI complex in the cytoplasm before mitochondrial import, leading to its degradation. Within the SIFI complex, UBR4 initiates ubiquitin chain that are further elongated or branched by KCMF1.</text>
</comment>
<comment type="similarity">
    <text evidence="3">Belongs to the cytochrome c oxidase VIII family.</text>
</comment>
<organism>
    <name type="scientific">Papio hamadryas</name>
    <name type="common">Hamadryas baboon</name>
    <dbReference type="NCBI Taxonomy" id="9557"/>
    <lineage>
        <taxon>Eukaryota</taxon>
        <taxon>Metazoa</taxon>
        <taxon>Chordata</taxon>
        <taxon>Craniata</taxon>
        <taxon>Vertebrata</taxon>
        <taxon>Euteleostomi</taxon>
        <taxon>Mammalia</taxon>
        <taxon>Eutheria</taxon>
        <taxon>Euarchontoglires</taxon>
        <taxon>Primates</taxon>
        <taxon>Haplorrhini</taxon>
        <taxon>Catarrhini</taxon>
        <taxon>Cercopithecidae</taxon>
        <taxon>Cercopithecinae</taxon>
        <taxon>Papio</taxon>
    </lineage>
</organism>
<evidence type="ECO:0000250" key="1">
    <source>
        <dbReference type="UniProtKB" id="P10175"/>
    </source>
</evidence>
<evidence type="ECO:0000250" key="2">
    <source>
        <dbReference type="UniProtKB" id="P10176"/>
    </source>
</evidence>
<evidence type="ECO:0000305" key="3"/>
<dbReference type="EMBL" id="AB072331">
    <property type="protein sequence ID" value="BAB86880.1"/>
    <property type="molecule type" value="Genomic_DNA"/>
</dbReference>
<dbReference type="SMR" id="Q8SQ78"/>
<dbReference type="UniPathway" id="UPA00705"/>
<dbReference type="GO" id="GO:0005743">
    <property type="term" value="C:mitochondrial inner membrane"/>
    <property type="evidence" value="ECO:0007669"/>
    <property type="project" value="UniProtKB-SubCell"/>
</dbReference>
<dbReference type="GO" id="GO:0045277">
    <property type="term" value="C:respiratory chain complex IV"/>
    <property type="evidence" value="ECO:0007669"/>
    <property type="project" value="InterPro"/>
</dbReference>
<dbReference type="GO" id="GO:0006123">
    <property type="term" value="P:mitochondrial electron transport, cytochrome c to oxygen"/>
    <property type="evidence" value="ECO:0007669"/>
    <property type="project" value="InterPro"/>
</dbReference>
<dbReference type="FunFam" id="4.10.81.10:FF:000001">
    <property type="entry name" value="Cytochrome c oxidase subunit 8B, mitochondrial"/>
    <property type="match status" value="1"/>
</dbReference>
<dbReference type="Gene3D" id="4.10.81.10">
    <property type="entry name" value="Cytochrome c oxidase, subunit 8"/>
    <property type="match status" value="1"/>
</dbReference>
<dbReference type="InterPro" id="IPR003205">
    <property type="entry name" value="Cyt_c_oxidase_su8"/>
</dbReference>
<dbReference type="InterPro" id="IPR036548">
    <property type="entry name" value="Cyt_c_oxidase_su8_sf"/>
</dbReference>
<dbReference type="PANTHER" id="PTHR16717">
    <property type="entry name" value="CYTOCHROME C OXIDASE POLYPEPTIDE VIII"/>
    <property type="match status" value="1"/>
</dbReference>
<dbReference type="PANTHER" id="PTHR16717:SF1">
    <property type="entry name" value="CYTOCHROME C OXIDASE SUBUNIT 8A, MITOCHONDRIAL"/>
    <property type="match status" value="1"/>
</dbReference>
<dbReference type="Pfam" id="PF02285">
    <property type="entry name" value="COX8"/>
    <property type="match status" value="1"/>
</dbReference>
<dbReference type="SUPFAM" id="SSF81431">
    <property type="entry name" value="Mitochondrial cytochrome c oxidase subunit VIIIb (aka IX)"/>
    <property type="match status" value="1"/>
</dbReference>
<gene>
    <name type="primary">COX8A</name>
    <name type="synonym">COX8</name>
    <name type="synonym">COX8L</name>
</gene>
<reference key="1">
    <citation type="journal article" date="2002" name="Genomics">
        <title>Search for genes positively selected during primate evolution by 5'-end-sequence screening of cynomolgus monkey cDNAs.</title>
        <authorList>
            <person name="Osada N."/>
            <person name="Kusuda J."/>
            <person name="Hirata M."/>
            <person name="Tanuma R."/>
            <person name="Hida M."/>
            <person name="Sugano S."/>
            <person name="Hirai M."/>
            <person name="Hashimoto K."/>
        </authorList>
    </citation>
    <scope>NUCLEOTIDE SEQUENCE [GENOMIC DNA]</scope>
</reference>